<sequence>MHLLGPWLLLLVLEYLAFSDSSKWAFEHPETLYAWEGACVWIPCTYRALDRDLESFILFHNPEYNKNTSKFDGTRLYESTKDGKVPSEQKRVQFLGDKNKNCTLSIHPVHVNDSGQLGLRMESKTAKWMERIHLNVSERPFPPHIQLPPEIQESQEVTLTCLLNFSCYGYPIQLQWLLEGVPMRQAAVTSTSLTIKSVFTRSELKFSPQWSHHGKIVTCQLQDADGKFLSNDTVQLNVKHTPKLEIKVTPSDAIVREGESVTMTCEVSSSNPEYTTISWLKDGTSLKKQNTLMLNLHEVTKDQSGKYCCQVSNDVGPGRSAEVFLQVQYAPEPSTVQILHSPAVEGSQVEFLCMSLANPLPTNYTWYHNGKEMQGRTEEKVHIPKILPWHAGTYSCVAENILGTGQRGPGAELDVQYPPKKVTTVIQNPTPIREGDTVTLSCNYNSSNPSVTRYEWKPHGAWEEPSLGVLKIQNVGWGNTTIACAACNSWCSWASPVALNVQYAPRDVRVRKIKPLSEIHSGNSVSLQCDFSSSHPKEVQFFWEKNGRLLGKESRLNFDSISPEDAGSYSCWVNNSIGQTASKAWTLEVLYAPRRLRVSMSPGDQVMEGKSATLTCESDANPPVSHYTWFDWNNQSLPYHSQKLRLEPVKVQHSGAYWCQGTNSVGKGHSPLSTLTVYYSPETIGRRVAVGFGSCLAILILAICGLKLQRRWKRTQSQQGLQENSSGQSFFVRNKKVRRAPLSEGPHSLGYYNPMMEDGISYTTLRFPETNIPRTGDAETSEMQSPPPDCDDTVTYSVLHKRQMGDYENVIPDFSEDEGIHYSELIQFGVGERPQAQENVDYVILKH</sequence>
<keyword id="KW-0130">Cell adhesion</keyword>
<keyword id="KW-1003">Cell membrane</keyword>
<keyword id="KW-1015">Disulfide bond</keyword>
<keyword id="KW-0325">Glycoprotein</keyword>
<keyword id="KW-0393">Immunoglobulin domain</keyword>
<keyword id="KW-1017">Isopeptide bond</keyword>
<keyword id="KW-0430">Lectin</keyword>
<keyword id="KW-0472">Membrane</keyword>
<keyword id="KW-0597">Phosphoprotein</keyword>
<keyword id="KW-1185">Reference proteome</keyword>
<keyword id="KW-0677">Repeat</keyword>
<keyword id="KW-0732">Signal</keyword>
<keyword id="KW-0812">Transmembrane</keyword>
<keyword id="KW-1133">Transmembrane helix</keyword>
<reference key="1">
    <citation type="journal article" date="2005" name="Nature">
        <title>Initial sequence of the chimpanzee genome and comparison with the human genome.</title>
        <authorList>
            <consortium name="Chimpanzee sequencing and analysis consortium"/>
        </authorList>
    </citation>
    <scope>NUCLEOTIDE SEQUENCE [LARGE SCALE GENOMIC DNA]</scope>
</reference>
<reference key="2">
    <citation type="journal article" date="2000" name="J. Biol. Chem.">
        <title>Loss of N-glycolylneuraminic acid in human evolution: implications for sialic acid recognition by siglecs.</title>
        <authorList>
            <person name="Brinkman-Van der Linden E.C.M."/>
            <person name="Sjoberg E.R."/>
            <person name="Juneja L.R."/>
            <person name="Crocker P.R."/>
            <person name="Varki N."/>
            <person name="Varki A."/>
        </authorList>
    </citation>
    <scope>NUCLEOTIDE SEQUENCE [MRNA] OF 1-332</scope>
</reference>
<gene>
    <name evidence="1" type="primary">CD22</name>
    <name type="synonym">SIGLEC2</name>
</gene>
<dbReference type="EMBL" id="NBAG03000037">
    <property type="protein sequence ID" value="PNI95673.1"/>
    <property type="molecule type" value="Genomic_DNA"/>
</dbReference>
<dbReference type="EMBL" id="AF199415">
    <property type="protein sequence ID" value="AAF44614.1"/>
    <property type="molecule type" value="mRNA"/>
</dbReference>
<dbReference type="RefSeq" id="XP_009433588.1">
    <property type="nucleotide sequence ID" value="XM_009435313.2"/>
</dbReference>
<dbReference type="RefSeq" id="XP_009433590.1">
    <property type="nucleotide sequence ID" value="XM_009435315.2"/>
</dbReference>
<dbReference type="RefSeq" id="XP_063656759.1">
    <property type="nucleotide sequence ID" value="XM_063800689.1"/>
</dbReference>
<dbReference type="RefSeq" id="XP_063656760.1">
    <property type="nucleotide sequence ID" value="XM_063800690.1"/>
</dbReference>
<dbReference type="RefSeq" id="XP_063656761.1">
    <property type="nucleotide sequence ID" value="XM_063800691.1"/>
</dbReference>
<dbReference type="SMR" id="Q9N1E6"/>
<dbReference type="FunCoup" id="Q9N1E6">
    <property type="interactions" value="399"/>
</dbReference>
<dbReference type="STRING" id="9598.ENSPTRP00000018557"/>
<dbReference type="GlyCosmos" id="Q9N1E6">
    <property type="glycosylation" value="13 sites, No reported glycans"/>
</dbReference>
<dbReference type="PaxDb" id="9598-ENSPTRP00000018557"/>
<dbReference type="Ensembl" id="ENSPTRT00000020070.5">
    <property type="protein sequence ID" value="ENSPTRP00000018557.4"/>
    <property type="gene ID" value="ENSPTRG00000010840.7"/>
</dbReference>
<dbReference type="GeneID" id="450167"/>
<dbReference type="VGNC" id="VGNC:2369">
    <property type="gene designation" value="CD22"/>
</dbReference>
<dbReference type="eggNOG" id="KOG4475">
    <property type="taxonomic scope" value="Eukaryota"/>
</dbReference>
<dbReference type="GeneTree" id="ENSGT01120000271890"/>
<dbReference type="InParanoid" id="Q9N1E6"/>
<dbReference type="Proteomes" id="UP000002277">
    <property type="component" value="Chromosome 19"/>
</dbReference>
<dbReference type="Proteomes" id="UP000236370">
    <property type="component" value="Unassembled WGS sequence"/>
</dbReference>
<dbReference type="GO" id="GO:0005769">
    <property type="term" value="C:early endosome"/>
    <property type="evidence" value="ECO:0000318"/>
    <property type="project" value="GO_Central"/>
</dbReference>
<dbReference type="GO" id="GO:0009897">
    <property type="term" value="C:external side of plasma membrane"/>
    <property type="evidence" value="ECO:0000318"/>
    <property type="project" value="GO_Central"/>
</dbReference>
<dbReference type="GO" id="GO:0032809">
    <property type="term" value="C:neuronal cell body membrane"/>
    <property type="evidence" value="ECO:0007669"/>
    <property type="project" value="Ensembl"/>
</dbReference>
<dbReference type="GO" id="GO:0055037">
    <property type="term" value="C:recycling endosome"/>
    <property type="evidence" value="ECO:0000318"/>
    <property type="project" value="GO_Central"/>
</dbReference>
<dbReference type="GO" id="GO:0030246">
    <property type="term" value="F:carbohydrate binding"/>
    <property type="evidence" value="ECO:0007669"/>
    <property type="project" value="UniProtKB-KW"/>
</dbReference>
<dbReference type="GO" id="GO:0042609">
    <property type="term" value="F:CD4 receptor binding"/>
    <property type="evidence" value="ECO:0000318"/>
    <property type="project" value="GO_Central"/>
</dbReference>
<dbReference type="GO" id="GO:0019903">
    <property type="term" value="F:protein phosphatase binding"/>
    <property type="evidence" value="ECO:0000318"/>
    <property type="project" value="GO_Central"/>
</dbReference>
<dbReference type="GO" id="GO:0033691">
    <property type="term" value="F:sialic acid binding"/>
    <property type="evidence" value="ECO:0000318"/>
    <property type="project" value="GO_Central"/>
</dbReference>
<dbReference type="GO" id="GO:0042113">
    <property type="term" value="P:B cell activation"/>
    <property type="evidence" value="ECO:0000318"/>
    <property type="project" value="GO_Central"/>
</dbReference>
<dbReference type="GO" id="GO:0007155">
    <property type="term" value="P:cell adhesion"/>
    <property type="evidence" value="ECO:0007669"/>
    <property type="project" value="UniProtKB-KW"/>
</dbReference>
<dbReference type="GO" id="GO:0050859">
    <property type="term" value="P:negative regulation of B cell receptor signaling pathway"/>
    <property type="evidence" value="ECO:0000318"/>
    <property type="project" value="GO_Central"/>
</dbReference>
<dbReference type="GO" id="GO:0050849">
    <property type="term" value="P:negative regulation of calcium-mediated signaling"/>
    <property type="evidence" value="ECO:0007669"/>
    <property type="project" value="Ensembl"/>
</dbReference>
<dbReference type="GO" id="GO:0002638">
    <property type="term" value="P:negative regulation of immunoglobulin production"/>
    <property type="evidence" value="ECO:0007669"/>
    <property type="project" value="Ensembl"/>
</dbReference>
<dbReference type="GO" id="GO:0030888">
    <property type="term" value="P:regulation of B cell proliferation"/>
    <property type="evidence" value="ECO:0000318"/>
    <property type="project" value="GO_Central"/>
</dbReference>
<dbReference type="GO" id="GO:0030100">
    <property type="term" value="P:regulation of endocytosis"/>
    <property type="evidence" value="ECO:0007669"/>
    <property type="project" value="Ensembl"/>
</dbReference>
<dbReference type="CDD" id="cd20938">
    <property type="entry name" value="IgC1_CD22_d2"/>
    <property type="match status" value="1"/>
</dbReference>
<dbReference type="CDD" id="cd20937">
    <property type="entry name" value="IgC2_CD22_d3"/>
    <property type="match status" value="1"/>
</dbReference>
<dbReference type="CDD" id="cd20929">
    <property type="entry name" value="IgV_CD22_d1"/>
    <property type="match status" value="1"/>
</dbReference>
<dbReference type="FunFam" id="2.60.40.10:FF:001199">
    <property type="entry name" value="B-cell receptor CD22"/>
    <property type="match status" value="1"/>
</dbReference>
<dbReference type="FunFam" id="2.60.40.10:FF:001605">
    <property type="entry name" value="B-cell receptor CD22"/>
    <property type="match status" value="2"/>
</dbReference>
<dbReference type="FunFam" id="2.60.40.10:FF:002011">
    <property type="entry name" value="B-cell receptor CD22"/>
    <property type="match status" value="1"/>
</dbReference>
<dbReference type="FunFam" id="2.60.40.10:FF:002030">
    <property type="entry name" value="B-cell receptor CD22"/>
    <property type="match status" value="1"/>
</dbReference>
<dbReference type="FunFam" id="2.60.40.10:FF:002336">
    <property type="entry name" value="B-cell receptor CD22"/>
    <property type="match status" value="1"/>
</dbReference>
<dbReference type="Gene3D" id="2.60.40.10">
    <property type="entry name" value="Immunoglobulins"/>
    <property type="match status" value="7"/>
</dbReference>
<dbReference type="InterPro" id="IPR013162">
    <property type="entry name" value="CD80_C2-set"/>
</dbReference>
<dbReference type="InterPro" id="IPR007110">
    <property type="entry name" value="Ig-like_dom"/>
</dbReference>
<dbReference type="InterPro" id="IPR036179">
    <property type="entry name" value="Ig-like_dom_sf"/>
</dbReference>
<dbReference type="InterPro" id="IPR013783">
    <property type="entry name" value="Ig-like_fold"/>
</dbReference>
<dbReference type="InterPro" id="IPR056386">
    <property type="entry name" value="Ig_CD22"/>
</dbReference>
<dbReference type="InterPro" id="IPR003599">
    <property type="entry name" value="Ig_sub"/>
</dbReference>
<dbReference type="InterPro" id="IPR003598">
    <property type="entry name" value="Ig_sub2"/>
</dbReference>
<dbReference type="PANTHER" id="PTHR46958">
    <property type="entry name" value="B-CELL RECEPTOR CD22"/>
    <property type="match status" value="1"/>
</dbReference>
<dbReference type="PANTHER" id="PTHR46958:SF1">
    <property type="entry name" value="B-CELL RECEPTOR CD22"/>
    <property type="match status" value="1"/>
</dbReference>
<dbReference type="Pfam" id="PF08205">
    <property type="entry name" value="C2-set_2"/>
    <property type="match status" value="1"/>
</dbReference>
<dbReference type="Pfam" id="PF13895">
    <property type="entry name" value="Ig_2"/>
    <property type="match status" value="1"/>
</dbReference>
<dbReference type="Pfam" id="PF13927">
    <property type="entry name" value="Ig_3"/>
    <property type="match status" value="3"/>
</dbReference>
<dbReference type="Pfam" id="PF24518">
    <property type="entry name" value="Ig_CD22"/>
    <property type="match status" value="1"/>
</dbReference>
<dbReference type="SMART" id="SM00409">
    <property type="entry name" value="IG"/>
    <property type="match status" value="7"/>
</dbReference>
<dbReference type="SMART" id="SM00408">
    <property type="entry name" value="IGc2"/>
    <property type="match status" value="4"/>
</dbReference>
<dbReference type="SUPFAM" id="SSF48726">
    <property type="entry name" value="Immunoglobulin"/>
    <property type="match status" value="7"/>
</dbReference>
<dbReference type="PROSITE" id="PS50835">
    <property type="entry name" value="IG_LIKE"/>
    <property type="match status" value="6"/>
</dbReference>
<accession>Q9N1E6</accession>
<accession>A0A6D2WBT6</accession>
<evidence type="ECO:0000250" key="1">
    <source>
        <dbReference type="UniProtKB" id="P20273"/>
    </source>
</evidence>
<evidence type="ECO:0000250" key="2">
    <source>
        <dbReference type="UniProtKB" id="P35329"/>
    </source>
</evidence>
<evidence type="ECO:0000255" key="3"/>
<evidence type="ECO:0000255" key="4">
    <source>
        <dbReference type="PROSITE-ProRule" id="PRU00114"/>
    </source>
</evidence>
<evidence type="ECO:0000305" key="5"/>
<feature type="signal peptide" evidence="3">
    <location>
        <begin position="1"/>
        <end position="19"/>
    </location>
</feature>
<feature type="chain" id="PRO_0000014876" description="B-cell receptor CD22" evidence="3">
    <location>
        <begin position="20"/>
        <end position="847"/>
    </location>
</feature>
<feature type="topological domain" description="Extracellular" evidence="5">
    <location>
        <begin position="20"/>
        <end position="687"/>
    </location>
</feature>
<feature type="transmembrane region" description="Helical" evidence="3">
    <location>
        <begin position="688"/>
        <end position="708"/>
    </location>
</feature>
<feature type="topological domain" description="Cytoplasmic" evidence="5">
    <location>
        <begin position="709"/>
        <end position="847"/>
    </location>
</feature>
<feature type="domain" description="Ig-like V-type" evidence="1">
    <location>
        <begin position="20"/>
        <end position="138"/>
    </location>
</feature>
<feature type="domain" description="Ig-like C2-type 1" evidence="4">
    <location>
        <begin position="143"/>
        <end position="235"/>
    </location>
</feature>
<feature type="domain" description="Ig-like C2-type 2" evidence="4">
    <location>
        <begin position="242"/>
        <end position="326"/>
    </location>
</feature>
<feature type="domain" description="Ig-like C2-type 3" evidence="4">
    <location>
        <begin position="331"/>
        <end position="416"/>
    </location>
</feature>
<feature type="domain" description="Ig-like C2-type 4" evidence="4">
    <location>
        <begin position="419"/>
        <end position="500"/>
    </location>
</feature>
<feature type="domain" description="Ig-like C2-type 5" evidence="4">
    <location>
        <begin position="505"/>
        <end position="582"/>
    </location>
</feature>
<feature type="domain" description="Ig-like C2-type 6" evidence="4">
    <location>
        <begin position="593"/>
        <end position="676"/>
    </location>
</feature>
<feature type="short sequence motif" description="ITIM motif 1" evidence="1">
    <location>
        <begin position="760"/>
        <end position="765"/>
    </location>
</feature>
<feature type="short sequence motif" description="ITIM motif 2" evidence="1">
    <location>
        <begin position="794"/>
        <end position="799"/>
    </location>
</feature>
<feature type="short sequence motif" description="ITIM motif 3" evidence="1">
    <location>
        <begin position="820"/>
        <end position="825"/>
    </location>
</feature>
<feature type="short sequence motif" description="ITIM motif 4" evidence="1">
    <location>
        <begin position="840"/>
        <end position="845"/>
    </location>
</feature>
<feature type="binding site" evidence="1">
    <location>
        <position position="120"/>
    </location>
    <ligand>
        <name>N-acetylneuraminate</name>
        <dbReference type="ChEBI" id="CHEBI:35418"/>
    </ligand>
</feature>
<feature type="modified residue" description="Phosphoserine" evidence="2">
    <location>
        <position position="725"/>
    </location>
</feature>
<feature type="modified residue" description="Phosphoserine" evidence="2">
    <location>
        <position position="726"/>
    </location>
</feature>
<feature type="modified residue" description="Phosphoserine" evidence="2">
    <location>
        <position position="729"/>
    </location>
</feature>
<feature type="modified residue" description="Phosphotyrosine" evidence="2">
    <location>
        <position position="762"/>
    </location>
</feature>
<feature type="modified residue" description="Phosphotyrosine" evidence="2">
    <location>
        <position position="807"/>
    </location>
</feature>
<feature type="modified residue" description="Phosphotyrosine" evidence="2">
    <location>
        <position position="822"/>
    </location>
</feature>
<feature type="modified residue" description="Phosphotyrosine" evidence="2">
    <location>
        <position position="842"/>
    </location>
</feature>
<feature type="glycosylation site" description="N-linked (GlcNAc...) asparagine" evidence="3">
    <location>
        <position position="67"/>
    </location>
</feature>
<feature type="glycosylation site" description="N-linked (GlcNAc...) asparagine" evidence="3">
    <location>
        <position position="101"/>
    </location>
</feature>
<feature type="glycosylation site" description="N-linked (GlcNAc...) asparagine" evidence="3">
    <location>
        <position position="112"/>
    </location>
</feature>
<feature type="glycosylation site" description="N-linked (GlcNAc...) asparagine" evidence="3">
    <location>
        <position position="135"/>
    </location>
</feature>
<feature type="glycosylation site" description="N-linked (GlcNAc...) asparagine" evidence="3">
    <location>
        <position position="164"/>
    </location>
</feature>
<feature type="glycosylation site" description="N-linked (GlcNAc...) asparagine" evidence="3">
    <location>
        <position position="231"/>
    </location>
</feature>
<feature type="glycosylation site" description="N-linked (GlcNAc...) asparagine" evidence="3">
    <location>
        <position position="363"/>
    </location>
</feature>
<feature type="glycosylation site" description="N-linked (GlcNAc...) asparagine" evidence="3">
    <location>
        <position position="428"/>
    </location>
</feature>
<feature type="glycosylation site" description="N-linked (GlcNAc...) asparagine" evidence="3">
    <location>
        <position position="445"/>
    </location>
</feature>
<feature type="glycosylation site" description="N-linked (GlcNAc...) asparagine" evidence="3">
    <location>
        <position position="448"/>
    </location>
</feature>
<feature type="glycosylation site" description="N-linked (GlcNAc...) asparagine" evidence="3">
    <location>
        <position position="479"/>
    </location>
</feature>
<feature type="glycosylation site" description="N-linked (GlcNAc...) asparagine" evidence="3">
    <location>
        <position position="574"/>
    </location>
</feature>
<feature type="glycosylation site" description="N-linked (GlcNAc...) asparagine" evidence="3">
    <location>
        <position position="634"/>
    </location>
</feature>
<feature type="disulfide bond" evidence="4">
    <location>
        <begin position="161"/>
        <end position="219"/>
    </location>
</feature>
<feature type="disulfide bond" evidence="4">
    <location>
        <begin position="265"/>
        <end position="309"/>
    </location>
</feature>
<feature type="disulfide bond" evidence="4">
    <location>
        <begin position="353"/>
        <end position="396"/>
    </location>
</feature>
<feature type="disulfide bond" evidence="4">
    <location>
        <begin position="442"/>
        <end position="484"/>
    </location>
</feature>
<feature type="disulfide bond" evidence="4">
    <location>
        <begin position="529"/>
        <end position="571"/>
    </location>
</feature>
<feature type="disulfide bond" evidence="4">
    <location>
        <begin position="616"/>
        <end position="659"/>
    </location>
</feature>
<feature type="sequence conflict" description="In Ref. 2; AAF44614." evidence="5" ref="2">
    <original>N</original>
    <variation>S</variation>
    <location>
        <position position="65"/>
    </location>
</feature>
<name>CD22_PANTR</name>
<proteinExistence type="evidence at transcript level"/>
<organism>
    <name type="scientific">Pan troglodytes</name>
    <name type="common">Chimpanzee</name>
    <dbReference type="NCBI Taxonomy" id="9598"/>
    <lineage>
        <taxon>Eukaryota</taxon>
        <taxon>Metazoa</taxon>
        <taxon>Chordata</taxon>
        <taxon>Craniata</taxon>
        <taxon>Vertebrata</taxon>
        <taxon>Euteleostomi</taxon>
        <taxon>Mammalia</taxon>
        <taxon>Eutheria</taxon>
        <taxon>Euarchontoglires</taxon>
        <taxon>Primates</taxon>
        <taxon>Haplorrhini</taxon>
        <taxon>Catarrhini</taxon>
        <taxon>Hominidae</taxon>
        <taxon>Pan</taxon>
    </lineage>
</organism>
<comment type="function">
    <text evidence="1">Most highly expressed siglec (sialic acid-binding immunoglobulin-like lectin) on B-cells that plays a role in various aspects of B-cell biology including differentiation, antigen presentation, and trafficking to bone marrow. Binds to alpha 2,6-linked sialic acid residues of surface molecules such as CD22 itself, CD45 and IgM in a cis configuration. Can also bind to ligands on other cells as an adhesion molecule in a trans configuration. Acts as an inhibitory coreceptor on the surface of B-cells and inhibits B-cell receptor induced signaling, characterized by inhibition of the calcium mobilization and cellular activation. Mechanistically, the immunoreceptor tyrosine-based inhibitory motif domain is phosphorylated by the Src kinase LYN, which in turn leads to the recruitment of the protein tyrosine phosphatase 1/PTPN6, leading to the negative regulation of BCR signaling. If this negative signaling from is of sufficient strength, apoptosis of the B-cell can be induced.</text>
</comment>
<comment type="subunit">
    <text evidence="1 2">Predominantly monomer of isoform CD22-beta. Also found as heterodimer of isoform CD22-beta and a shorter isoform. Interacts with PTPN6/SHP-1, LYN, SYK, PIK3R1/PIK3R2 and PLCG1 upon phosphorylation. Interacts with GRB2, INPP5D and SHC1 upon phosphorylation (By similarity). May form a complex with INPP5D/SHIP, GRB2 and SHC1 (By similarity).</text>
</comment>
<comment type="subcellular location">
    <subcellularLocation>
        <location evidence="1">Cell membrane</location>
        <topology evidence="1">Single-pass type I membrane protein</topology>
    </subcellularLocation>
</comment>
<comment type="domain">
    <text evidence="1">Contains 4 copies of a cytoplasmic motif that is referred to as the immunoreceptor tyrosine-based inhibitor motif (ITIM). This motif is involved in modulation of cellular responses. The phosphorylated ITIM motif can bind the SH2 domain of several SH2-containing phosphatases.</text>
</comment>
<comment type="PTM">
    <text evidence="2">Phosphorylation of Tyr-762, Tyr-807 and Tyr-822 are involved in binding to SYK, GRB2 and SYK, respectively. Phosphorylation of Tyr-842 is involved in binding to SYK, PLCG2 and PIK3R1/PIK3R2.</text>
</comment>
<comment type="PTM">
    <text evidence="2">Phosphorylated on tyrosine residues by LYN.</text>
</comment>
<comment type="similarity">
    <text evidence="5">Belongs to the immunoglobulin superfamily. SIGLEC (sialic acid binding Ig-like lectin) family.</text>
</comment>
<protein>
    <recommendedName>
        <fullName evidence="1">B-cell receptor CD22</fullName>
    </recommendedName>
    <alternativeName>
        <fullName>Sialic acid-binding Ig-like lectin 2</fullName>
        <shortName>Siglec-2</shortName>
    </alternativeName>
    <cdAntigenName>CD22</cdAntigenName>
</protein>